<sequence>MYKLVLVRHGESEWNKENLFTGWTDVKLSDKGIDEAVEAGLLLKQEGYSFDIAFSSLLSRANDTLNIILRELGQSYISVKKTWRLNERHYGALQGLNKSETAAKYGEDKVLIWRRSYDVPPMSLDESDDRHPIKDPRYKHIPKRELPSTECLKDTVARVIPYWTDEIAKEVLEGKKVIVAAHGNSLRALVKYFDNLSEEDVLKLNIPTGIPLVYELDKDLNPIKHYYLGDESKIKKAMESVASQGKLK</sequence>
<protein>
    <recommendedName>
        <fullName evidence="1">2,3-bisphosphoglycerate-dependent phosphoglycerate mutase</fullName>
        <shortName evidence="1">BPG-dependent PGAM</shortName>
        <shortName evidence="1">PGAM</shortName>
        <shortName evidence="1">Phosphoglyceromutase</shortName>
        <shortName evidence="1">dPGM</shortName>
        <ecNumber evidence="1">5.4.2.11</ecNumber>
    </recommendedName>
</protein>
<feature type="chain" id="PRO_1000135921" description="2,3-bisphosphoglycerate-dependent phosphoglycerate mutase">
    <location>
        <begin position="1"/>
        <end position="248"/>
    </location>
</feature>
<feature type="active site" description="Tele-phosphohistidine intermediate" evidence="1">
    <location>
        <position position="9"/>
    </location>
</feature>
<feature type="active site" description="Proton donor/acceptor" evidence="1">
    <location>
        <position position="87"/>
    </location>
</feature>
<feature type="binding site" evidence="1">
    <location>
        <begin position="8"/>
        <end position="15"/>
    </location>
    <ligand>
        <name>substrate</name>
    </ligand>
</feature>
<feature type="binding site" evidence="1">
    <location>
        <begin position="21"/>
        <end position="22"/>
    </location>
    <ligand>
        <name>substrate</name>
    </ligand>
</feature>
<feature type="binding site" evidence="1">
    <location>
        <position position="60"/>
    </location>
    <ligand>
        <name>substrate</name>
    </ligand>
</feature>
<feature type="binding site" evidence="1">
    <location>
        <begin position="87"/>
        <end position="90"/>
    </location>
    <ligand>
        <name>substrate</name>
    </ligand>
</feature>
<feature type="binding site" evidence="1">
    <location>
        <position position="98"/>
    </location>
    <ligand>
        <name>substrate</name>
    </ligand>
</feature>
<feature type="binding site" evidence="1">
    <location>
        <begin position="114"/>
        <end position="115"/>
    </location>
    <ligand>
        <name>substrate</name>
    </ligand>
</feature>
<feature type="binding site" evidence="1">
    <location>
        <begin position="183"/>
        <end position="184"/>
    </location>
    <ligand>
        <name>substrate</name>
    </ligand>
</feature>
<feature type="site" description="Transition state stabilizer" evidence="1">
    <location>
        <position position="182"/>
    </location>
</feature>
<comment type="function">
    <text evidence="1">Catalyzes the interconversion of 2-phosphoglycerate and 3-phosphoglycerate.</text>
</comment>
<comment type="catalytic activity">
    <reaction evidence="1">
        <text>(2R)-2-phosphoglycerate = (2R)-3-phosphoglycerate</text>
        <dbReference type="Rhea" id="RHEA:15901"/>
        <dbReference type="ChEBI" id="CHEBI:58272"/>
        <dbReference type="ChEBI" id="CHEBI:58289"/>
        <dbReference type="EC" id="5.4.2.11"/>
    </reaction>
</comment>
<comment type="pathway">
    <text evidence="1">Carbohydrate degradation; glycolysis; pyruvate from D-glyceraldehyde 3-phosphate: step 3/5.</text>
</comment>
<comment type="similarity">
    <text evidence="1">Belongs to the phosphoglycerate mutase family. BPG-dependent PGAM subfamily.</text>
</comment>
<accession>B7J2L3</accession>
<organism>
    <name type="scientific">Borreliella burgdorferi (strain ZS7)</name>
    <name type="common">Borrelia burgdorferi</name>
    <dbReference type="NCBI Taxonomy" id="445985"/>
    <lineage>
        <taxon>Bacteria</taxon>
        <taxon>Pseudomonadati</taxon>
        <taxon>Spirochaetota</taxon>
        <taxon>Spirochaetia</taxon>
        <taxon>Spirochaetales</taxon>
        <taxon>Borreliaceae</taxon>
        <taxon>Borreliella</taxon>
    </lineage>
</organism>
<dbReference type="EC" id="5.4.2.11" evidence="1"/>
<dbReference type="EMBL" id="CP001205">
    <property type="protein sequence ID" value="ACK74778.1"/>
    <property type="molecule type" value="Genomic_DNA"/>
</dbReference>
<dbReference type="RefSeq" id="WP_002657375.1">
    <property type="nucleotide sequence ID" value="NC_011728.1"/>
</dbReference>
<dbReference type="SMR" id="B7J2L3"/>
<dbReference type="GeneID" id="56567468"/>
<dbReference type="KEGG" id="bbz:BbuZS7_0678"/>
<dbReference type="HOGENOM" id="CLU_033323_1_1_12"/>
<dbReference type="UniPathway" id="UPA00109">
    <property type="reaction ID" value="UER00186"/>
</dbReference>
<dbReference type="Proteomes" id="UP000006901">
    <property type="component" value="Chromosome"/>
</dbReference>
<dbReference type="GO" id="GO:0004619">
    <property type="term" value="F:phosphoglycerate mutase activity"/>
    <property type="evidence" value="ECO:0007669"/>
    <property type="project" value="UniProtKB-EC"/>
</dbReference>
<dbReference type="GO" id="GO:0006094">
    <property type="term" value="P:gluconeogenesis"/>
    <property type="evidence" value="ECO:0007669"/>
    <property type="project" value="UniProtKB-UniRule"/>
</dbReference>
<dbReference type="GO" id="GO:0006096">
    <property type="term" value="P:glycolytic process"/>
    <property type="evidence" value="ECO:0007669"/>
    <property type="project" value="UniProtKB-UniRule"/>
</dbReference>
<dbReference type="CDD" id="cd07067">
    <property type="entry name" value="HP_PGM_like"/>
    <property type="match status" value="1"/>
</dbReference>
<dbReference type="FunFam" id="3.40.50.1240:FF:000003">
    <property type="entry name" value="2,3-bisphosphoglycerate-dependent phosphoglycerate mutase"/>
    <property type="match status" value="1"/>
</dbReference>
<dbReference type="Gene3D" id="3.40.50.1240">
    <property type="entry name" value="Phosphoglycerate mutase-like"/>
    <property type="match status" value="1"/>
</dbReference>
<dbReference type="HAMAP" id="MF_01039">
    <property type="entry name" value="PGAM_GpmA"/>
    <property type="match status" value="1"/>
</dbReference>
<dbReference type="InterPro" id="IPR013078">
    <property type="entry name" value="His_Pase_superF_clade-1"/>
</dbReference>
<dbReference type="InterPro" id="IPR029033">
    <property type="entry name" value="His_PPase_superfam"/>
</dbReference>
<dbReference type="InterPro" id="IPR001345">
    <property type="entry name" value="PG/BPGM_mutase_AS"/>
</dbReference>
<dbReference type="InterPro" id="IPR005952">
    <property type="entry name" value="Phosphogly_mut1"/>
</dbReference>
<dbReference type="NCBIfam" id="TIGR01258">
    <property type="entry name" value="pgm_1"/>
    <property type="match status" value="1"/>
</dbReference>
<dbReference type="NCBIfam" id="NF010713">
    <property type="entry name" value="PRK14115.1"/>
    <property type="match status" value="1"/>
</dbReference>
<dbReference type="PANTHER" id="PTHR11931">
    <property type="entry name" value="PHOSPHOGLYCERATE MUTASE"/>
    <property type="match status" value="1"/>
</dbReference>
<dbReference type="Pfam" id="PF00300">
    <property type="entry name" value="His_Phos_1"/>
    <property type="match status" value="2"/>
</dbReference>
<dbReference type="PIRSF" id="PIRSF000709">
    <property type="entry name" value="6PFK_2-Ptase"/>
    <property type="match status" value="1"/>
</dbReference>
<dbReference type="SMART" id="SM00855">
    <property type="entry name" value="PGAM"/>
    <property type="match status" value="1"/>
</dbReference>
<dbReference type="SUPFAM" id="SSF53254">
    <property type="entry name" value="Phosphoglycerate mutase-like"/>
    <property type="match status" value="1"/>
</dbReference>
<dbReference type="PROSITE" id="PS00175">
    <property type="entry name" value="PG_MUTASE"/>
    <property type="match status" value="1"/>
</dbReference>
<gene>
    <name evidence="1" type="primary">gpmA</name>
    <name type="ordered locus">BbuZS7_0678</name>
</gene>
<name>GPMA_BORBZ</name>
<keyword id="KW-0312">Gluconeogenesis</keyword>
<keyword id="KW-0324">Glycolysis</keyword>
<keyword id="KW-0413">Isomerase</keyword>
<reference key="1">
    <citation type="journal article" date="2011" name="J. Bacteriol.">
        <title>Whole-genome sequences of thirteen isolates of Borrelia burgdorferi.</title>
        <authorList>
            <person name="Schutzer S.E."/>
            <person name="Fraser-Liggett C.M."/>
            <person name="Casjens S.R."/>
            <person name="Qiu W.G."/>
            <person name="Dunn J.J."/>
            <person name="Mongodin E.F."/>
            <person name="Luft B.J."/>
        </authorList>
    </citation>
    <scope>NUCLEOTIDE SEQUENCE [LARGE SCALE GENOMIC DNA]</scope>
    <source>
        <strain>ZS7</strain>
    </source>
</reference>
<evidence type="ECO:0000255" key="1">
    <source>
        <dbReference type="HAMAP-Rule" id="MF_01039"/>
    </source>
</evidence>
<proteinExistence type="inferred from homology"/>